<sequence>MALDKLLEHEAQAEIERIRAEARDRAQQILASARERADALLESRRRLLETQRQAALVRARSAADLELSAARLTASEQGMAEVYRLVEGHLREITGLPEYREILARLIAEARQAIPEAEAVEVNPADLALARELVTDLSVRENPAIQGGVRVVARGGKSGITNTLAGRLDRLRGELAPQVSRLLAE</sequence>
<dbReference type="EMBL" id="CP000359">
    <property type="protein sequence ID" value="ABF46344.1"/>
    <property type="molecule type" value="Genomic_DNA"/>
</dbReference>
<dbReference type="RefSeq" id="WP_011531170.1">
    <property type="nucleotide sequence ID" value="NC_008025.1"/>
</dbReference>
<dbReference type="SMR" id="Q1IWP0"/>
<dbReference type="STRING" id="319795.Dgeo_2050"/>
<dbReference type="KEGG" id="dge:Dgeo_2050"/>
<dbReference type="eggNOG" id="COG1390">
    <property type="taxonomic scope" value="Bacteria"/>
</dbReference>
<dbReference type="HOGENOM" id="CLU_123924_0_0_0"/>
<dbReference type="Proteomes" id="UP000002431">
    <property type="component" value="Chromosome"/>
</dbReference>
<dbReference type="GO" id="GO:0033178">
    <property type="term" value="C:proton-transporting two-sector ATPase complex, catalytic domain"/>
    <property type="evidence" value="ECO:0007669"/>
    <property type="project" value="InterPro"/>
</dbReference>
<dbReference type="GO" id="GO:0005524">
    <property type="term" value="F:ATP binding"/>
    <property type="evidence" value="ECO:0007669"/>
    <property type="project" value="UniProtKB-UniRule"/>
</dbReference>
<dbReference type="GO" id="GO:0046933">
    <property type="term" value="F:proton-transporting ATP synthase activity, rotational mechanism"/>
    <property type="evidence" value="ECO:0007669"/>
    <property type="project" value="UniProtKB-UniRule"/>
</dbReference>
<dbReference type="GO" id="GO:0046961">
    <property type="term" value="F:proton-transporting ATPase activity, rotational mechanism"/>
    <property type="evidence" value="ECO:0007669"/>
    <property type="project" value="InterPro"/>
</dbReference>
<dbReference type="GO" id="GO:0042777">
    <property type="term" value="P:proton motive force-driven plasma membrane ATP synthesis"/>
    <property type="evidence" value="ECO:0007669"/>
    <property type="project" value="UniProtKB-UniRule"/>
</dbReference>
<dbReference type="Gene3D" id="3.30.2320.30">
    <property type="entry name" value="ATP synthase, E subunit, C-terminal"/>
    <property type="match status" value="1"/>
</dbReference>
<dbReference type="Gene3D" id="1.20.5.620">
    <property type="entry name" value="F1F0 ATP synthase subunit B, membrane domain"/>
    <property type="match status" value="1"/>
</dbReference>
<dbReference type="HAMAP" id="MF_00311">
    <property type="entry name" value="ATP_synth_E_arch"/>
    <property type="match status" value="1"/>
</dbReference>
<dbReference type="InterPro" id="IPR038495">
    <property type="entry name" value="ATPase_E_C"/>
</dbReference>
<dbReference type="InterPro" id="IPR002842">
    <property type="entry name" value="ATPase_V1_Esu"/>
</dbReference>
<dbReference type="Pfam" id="PF01991">
    <property type="entry name" value="vATP-synt_E"/>
    <property type="match status" value="1"/>
</dbReference>
<dbReference type="SUPFAM" id="SSF160527">
    <property type="entry name" value="V-type ATPase subunit E-like"/>
    <property type="match status" value="1"/>
</dbReference>
<comment type="function">
    <text evidence="1">Produces ATP from ADP in the presence of a proton gradient across the membrane.</text>
</comment>
<comment type="similarity">
    <text evidence="1">Belongs to the V-ATPase E subunit family.</text>
</comment>
<reference key="1">
    <citation type="submission" date="2006-04" db="EMBL/GenBank/DDBJ databases">
        <title>Complete sequence of chromosome of Deinococcus geothermalis DSM 11300.</title>
        <authorList>
            <person name="Copeland A."/>
            <person name="Lucas S."/>
            <person name="Lapidus A."/>
            <person name="Barry K."/>
            <person name="Detter J.C."/>
            <person name="Glavina del Rio T."/>
            <person name="Hammon N."/>
            <person name="Israni S."/>
            <person name="Dalin E."/>
            <person name="Tice H."/>
            <person name="Pitluck S."/>
            <person name="Brettin T."/>
            <person name="Bruce D."/>
            <person name="Han C."/>
            <person name="Tapia R."/>
            <person name="Saunders E."/>
            <person name="Gilna P."/>
            <person name="Schmutz J."/>
            <person name="Larimer F."/>
            <person name="Land M."/>
            <person name="Hauser L."/>
            <person name="Kyrpides N."/>
            <person name="Kim E."/>
            <person name="Daly M.J."/>
            <person name="Fredrickson J.K."/>
            <person name="Makarova K.S."/>
            <person name="Gaidamakova E.K."/>
            <person name="Zhai M."/>
            <person name="Richardson P."/>
        </authorList>
    </citation>
    <scope>NUCLEOTIDE SEQUENCE [LARGE SCALE GENOMIC DNA]</scope>
    <source>
        <strain>DSM 11300 / CIP 105573 / AG-3a</strain>
    </source>
</reference>
<organism>
    <name type="scientific">Deinococcus geothermalis (strain DSM 11300 / CIP 105573 / AG-3a)</name>
    <dbReference type="NCBI Taxonomy" id="319795"/>
    <lineage>
        <taxon>Bacteria</taxon>
        <taxon>Thermotogati</taxon>
        <taxon>Deinococcota</taxon>
        <taxon>Deinococci</taxon>
        <taxon>Deinococcales</taxon>
        <taxon>Deinococcaceae</taxon>
        <taxon>Deinococcus</taxon>
    </lineage>
</organism>
<feature type="chain" id="PRO_1000059406" description="V-type ATP synthase subunit E">
    <location>
        <begin position="1"/>
        <end position="185"/>
    </location>
</feature>
<gene>
    <name evidence="1" type="primary">atpE</name>
    <name type="ordered locus">Dgeo_2050</name>
</gene>
<evidence type="ECO:0000255" key="1">
    <source>
        <dbReference type="HAMAP-Rule" id="MF_00311"/>
    </source>
</evidence>
<name>VATE_DEIGD</name>
<protein>
    <recommendedName>
        <fullName>V-type ATP synthase subunit E</fullName>
    </recommendedName>
    <alternativeName>
        <fullName evidence="1">V-ATPase subunit E</fullName>
    </alternativeName>
</protein>
<keyword id="KW-0066">ATP synthesis</keyword>
<keyword id="KW-0375">Hydrogen ion transport</keyword>
<keyword id="KW-0406">Ion transport</keyword>
<keyword id="KW-0813">Transport</keyword>
<accession>Q1IWP0</accession>
<proteinExistence type="inferred from homology"/>